<comment type="function">
    <text evidence="1">Catalyzes the irreversible cleavage of the glycosidic bond in both 5'-methylthioadenosine (MTA) and S-adenosylhomocysteine (SAH/AdoHcy) to adenine and the corresponding thioribose, 5'-methylthioribose and S-ribosylhomocysteine, respectively. Also cleaves 5'-deoxyadenosine, a toxic by-product of radical S-adenosylmethionine (SAM) enzymes, into 5-deoxyribose and adenine. Thus, is required for in vivo function of the radical SAM enzymes biotin synthase and lipoic acid synthase, that are inhibited by 5'-deoxyadenosine accumulation.</text>
</comment>
<comment type="catalytic activity">
    <reaction evidence="1">
        <text>S-adenosyl-L-homocysteine + H2O = S-(5-deoxy-D-ribos-5-yl)-L-homocysteine + adenine</text>
        <dbReference type="Rhea" id="RHEA:17805"/>
        <dbReference type="ChEBI" id="CHEBI:15377"/>
        <dbReference type="ChEBI" id="CHEBI:16708"/>
        <dbReference type="ChEBI" id="CHEBI:57856"/>
        <dbReference type="ChEBI" id="CHEBI:58195"/>
        <dbReference type="EC" id="3.2.2.9"/>
    </reaction>
</comment>
<comment type="catalytic activity">
    <reaction evidence="1">
        <text>S-methyl-5'-thioadenosine + H2O = 5-(methylsulfanyl)-D-ribose + adenine</text>
        <dbReference type="Rhea" id="RHEA:13617"/>
        <dbReference type="ChEBI" id="CHEBI:15377"/>
        <dbReference type="ChEBI" id="CHEBI:16708"/>
        <dbReference type="ChEBI" id="CHEBI:17509"/>
        <dbReference type="ChEBI" id="CHEBI:78440"/>
        <dbReference type="EC" id="3.2.2.9"/>
    </reaction>
</comment>
<comment type="catalytic activity">
    <reaction evidence="1">
        <text>5'-deoxyadenosine + H2O = 5-deoxy-D-ribose + adenine</text>
        <dbReference type="Rhea" id="RHEA:29859"/>
        <dbReference type="ChEBI" id="CHEBI:15377"/>
        <dbReference type="ChEBI" id="CHEBI:16708"/>
        <dbReference type="ChEBI" id="CHEBI:17319"/>
        <dbReference type="ChEBI" id="CHEBI:149540"/>
        <dbReference type="EC" id="3.2.2.9"/>
    </reaction>
    <physiologicalReaction direction="left-to-right" evidence="1">
        <dbReference type="Rhea" id="RHEA:29860"/>
    </physiologicalReaction>
</comment>
<comment type="pathway">
    <text evidence="1">Amino-acid biosynthesis; L-methionine biosynthesis via salvage pathway; S-methyl-5-thio-alpha-D-ribose 1-phosphate from S-methyl-5'-thioadenosine (hydrolase route): step 1/2.</text>
</comment>
<comment type="subunit">
    <text evidence="1">Homodimer.</text>
</comment>
<comment type="similarity">
    <text evidence="1">Belongs to the PNP/UDP phosphorylase family. MtnN subfamily.</text>
</comment>
<reference key="1">
    <citation type="journal article" date="2006" name="Genome Res.">
        <title>Massive genome erosion and functional adaptations provide insights into the symbiotic lifestyle of Sodalis glossinidius in the tsetse host.</title>
        <authorList>
            <person name="Toh H."/>
            <person name="Weiss B.L."/>
            <person name="Perkin S.A.H."/>
            <person name="Yamashita A."/>
            <person name="Oshima K."/>
            <person name="Hattori M."/>
            <person name="Aksoy S."/>
        </authorList>
    </citation>
    <scope>NUCLEOTIDE SEQUENCE [LARGE SCALE GENOMIC DNA]</scope>
    <source>
        <strain>morsitans</strain>
    </source>
</reference>
<gene>
    <name evidence="1" type="primary">mtnN</name>
    <name type="ordered locus">SG0503</name>
</gene>
<name>MTNN_SODGM</name>
<organism>
    <name type="scientific">Sodalis glossinidius (strain morsitans)</name>
    <dbReference type="NCBI Taxonomy" id="343509"/>
    <lineage>
        <taxon>Bacteria</taxon>
        <taxon>Pseudomonadati</taxon>
        <taxon>Pseudomonadota</taxon>
        <taxon>Gammaproteobacteria</taxon>
        <taxon>Enterobacterales</taxon>
        <taxon>Bruguierivoracaceae</taxon>
        <taxon>Sodalis</taxon>
    </lineage>
</organism>
<proteinExistence type="inferred from homology"/>
<dbReference type="EC" id="3.2.2.9" evidence="1"/>
<dbReference type="EMBL" id="AP008232">
    <property type="protein sequence ID" value="BAE73778.1"/>
    <property type="molecule type" value="Genomic_DNA"/>
</dbReference>
<dbReference type="RefSeq" id="WP_011410476.1">
    <property type="nucleotide sequence ID" value="NC_007712.1"/>
</dbReference>
<dbReference type="SMR" id="Q2NVP7"/>
<dbReference type="STRING" id="343509.SG0503"/>
<dbReference type="KEGG" id="sgl:SG0503"/>
<dbReference type="eggNOG" id="COG0775">
    <property type="taxonomic scope" value="Bacteria"/>
</dbReference>
<dbReference type="HOGENOM" id="CLU_031248_2_2_6"/>
<dbReference type="OrthoDB" id="9792278at2"/>
<dbReference type="BioCyc" id="SGLO343509:SGP1_RS04485-MONOMER"/>
<dbReference type="UniPathway" id="UPA00904">
    <property type="reaction ID" value="UER00871"/>
</dbReference>
<dbReference type="Proteomes" id="UP000001932">
    <property type="component" value="Chromosome"/>
</dbReference>
<dbReference type="GO" id="GO:0005829">
    <property type="term" value="C:cytosol"/>
    <property type="evidence" value="ECO:0007669"/>
    <property type="project" value="TreeGrafter"/>
</dbReference>
<dbReference type="GO" id="GO:0008782">
    <property type="term" value="F:adenosylhomocysteine nucleosidase activity"/>
    <property type="evidence" value="ECO:0007669"/>
    <property type="project" value="UniProtKB-UniRule"/>
</dbReference>
<dbReference type="GO" id="GO:0008930">
    <property type="term" value="F:methylthioadenosine nucleosidase activity"/>
    <property type="evidence" value="ECO:0007669"/>
    <property type="project" value="UniProtKB-UniRule"/>
</dbReference>
<dbReference type="GO" id="GO:0019509">
    <property type="term" value="P:L-methionine salvage from methylthioadenosine"/>
    <property type="evidence" value="ECO:0007669"/>
    <property type="project" value="UniProtKB-UniRule"/>
</dbReference>
<dbReference type="GO" id="GO:0019284">
    <property type="term" value="P:L-methionine salvage from S-adenosylmethionine"/>
    <property type="evidence" value="ECO:0007669"/>
    <property type="project" value="TreeGrafter"/>
</dbReference>
<dbReference type="GO" id="GO:0046124">
    <property type="term" value="P:purine deoxyribonucleoside catabolic process"/>
    <property type="evidence" value="ECO:0007669"/>
    <property type="project" value="UniProtKB-UniRule"/>
</dbReference>
<dbReference type="CDD" id="cd09008">
    <property type="entry name" value="MTAN"/>
    <property type="match status" value="1"/>
</dbReference>
<dbReference type="FunFam" id="3.40.50.1580:FF:000001">
    <property type="entry name" value="MTA/SAH nucleosidase family protein"/>
    <property type="match status" value="1"/>
</dbReference>
<dbReference type="Gene3D" id="3.40.50.1580">
    <property type="entry name" value="Nucleoside phosphorylase domain"/>
    <property type="match status" value="1"/>
</dbReference>
<dbReference type="HAMAP" id="MF_01684">
    <property type="entry name" value="Salvage_MtnN"/>
    <property type="match status" value="1"/>
</dbReference>
<dbReference type="InterPro" id="IPR010049">
    <property type="entry name" value="MTA_SAH_Nsdase"/>
</dbReference>
<dbReference type="InterPro" id="IPR000845">
    <property type="entry name" value="Nucleoside_phosphorylase_d"/>
</dbReference>
<dbReference type="InterPro" id="IPR035994">
    <property type="entry name" value="Nucleoside_phosphorylase_sf"/>
</dbReference>
<dbReference type="NCBIfam" id="TIGR01704">
    <property type="entry name" value="MTA_SAH-Nsdase"/>
    <property type="match status" value="1"/>
</dbReference>
<dbReference type="NCBIfam" id="NF004079">
    <property type="entry name" value="PRK05584.1"/>
    <property type="match status" value="1"/>
</dbReference>
<dbReference type="PANTHER" id="PTHR46832">
    <property type="entry name" value="5'-METHYLTHIOADENOSINE/S-ADENOSYLHOMOCYSTEINE NUCLEOSIDASE"/>
    <property type="match status" value="1"/>
</dbReference>
<dbReference type="PANTHER" id="PTHR46832:SF1">
    <property type="entry name" value="5'-METHYLTHIOADENOSINE_S-ADENOSYLHOMOCYSTEINE NUCLEOSIDASE"/>
    <property type="match status" value="1"/>
</dbReference>
<dbReference type="Pfam" id="PF01048">
    <property type="entry name" value="PNP_UDP_1"/>
    <property type="match status" value="1"/>
</dbReference>
<dbReference type="SUPFAM" id="SSF53167">
    <property type="entry name" value="Purine and uridine phosphorylases"/>
    <property type="match status" value="1"/>
</dbReference>
<protein>
    <recommendedName>
        <fullName evidence="1">5'-methylthioadenosine/S-adenosylhomocysteine nucleosidase</fullName>
        <shortName evidence="1">MTA/SAH nucleosidase</shortName>
        <shortName evidence="1">MTAN</shortName>
        <ecNumber evidence="1">3.2.2.9</ecNumber>
    </recommendedName>
    <alternativeName>
        <fullName evidence="1">5'-deoxyadenosine nucleosidase</fullName>
        <shortName evidence="1">DOA nucleosidase</shortName>
        <shortName evidence="1">dAdo nucleosidase</shortName>
    </alternativeName>
    <alternativeName>
        <fullName evidence="1">5'-methylthioadenosine nucleosidase</fullName>
        <shortName evidence="1">MTA nucleosidase</shortName>
    </alternativeName>
    <alternativeName>
        <fullName evidence="1">S-adenosylhomocysteine nucleosidase</fullName>
        <shortName evidence="1">AdoHcy nucleosidase</shortName>
        <shortName evidence="1">SAH nucleosidase</shortName>
        <shortName evidence="1">SRH nucleosidase</shortName>
    </alternativeName>
</protein>
<keyword id="KW-0028">Amino-acid biosynthesis</keyword>
<keyword id="KW-0378">Hydrolase</keyword>
<keyword id="KW-0486">Methionine biosynthesis</keyword>
<evidence type="ECO:0000255" key="1">
    <source>
        <dbReference type="HAMAP-Rule" id="MF_01684"/>
    </source>
</evidence>
<accession>Q2NVP7</accession>
<sequence>MKIGIIGAMEQEVALLRDRIDHSTLCQQAGCEIYMGQLHGVEVALVKSGIGKVSAALGTTLLLDHFKPELVINTGSAGGLAPSLKVGDIVVSHEVRYHDVDVTAFGYEPGQMAQCPASFNAAPSLVALAEESVDRLGMHAVRGLVVSGDAFINDADGLAHIRQTFPQAIAVEMEATAIAHVCHQFAVPFVVVRAISDVADQASHLSFDEFLTVAAQSSSRLVEEMVQALAGQR</sequence>
<feature type="chain" id="PRO_0000359361" description="5'-methylthioadenosine/S-adenosylhomocysteine nucleosidase">
    <location>
        <begin position="1"/>
        <end position="233"/>
    </location>
</feature>
<feature type="active site" description="Proton acceptor" evidence="1">
    <location>
        <position position="12"/>
    </location>
</feature>
<feature type="active site" description="Proton donor" evidence="1">
    <location>
        <position position="197"/>
    </location>
</feature>
<feature type="binding site" evidence="1">
    <location>
        <position position="78"/>
    </location>
    <ligand>
        <name>substrate</name>
    </ligand>
</feature>
<feature type="binding site" evidence="1">
    <location>
        <position position="152"/>
    </location>
    <ligand>
        <name>substrate</name>
    </ligand>
</feature>
<feature type="binding site" evidence="1">
    <location>
        <begin position="173"/>
        <end position="174"/>
    </location>
    <ligand>
        <name>substrate</name>
    </ligand>
</feature>